<keyword id="KW-0150">Chloroplast</keyword>
<keyword id="KW-0249">Electron transport</keyword>
<keyword id="KW-0472">Membrane</keyword>
<keyword id="KW-0602">Photosynthesis</keyword>
<keyword id="KW-0934">Plastid</keyword>
<keyword id="KW-0793">Thylakoid</keyword>
<keyword id="KW-0812">Transmembrane</keyword>
<keyword id="KW-1133">Transmembrane helix</keyword>
<keyword id="KW-0813">Transport</keyword>
<evidence type="ECO:0000255" key="1">
    <source>
        <dbReference type="HAMAP-Rule" id="MF_00432"/>
    </source>
</evidence>
<name>PETG_OEDCA</name>
<sequence length="37" mass="4049">MVEPLLSGIVLGLVPVTIAGLFVTAYLQYRRGDQATW</sequence>
<geneLocation type="chloroplast"/>
<comment type="function">
    <text evidence="1">Component of the cytochrome b6-f complex, which mediates electron transfer between photosystem II (PSII) and photosystem I (PSI), cyclic electron flow around PSI, and state transitions. PetG is required for either the stability or assembly of the cytochrome b6-f complex.</text>
</comment>
<comment type="subunit">
    <text evidence="1">The 4 large subunits of the cytochrome b6-f complex are cytochrome b6, subunit IV (17 kDa polypeptide, PetD), cytochrome f and the Rieske protein, while the 4 small subunits are PetG, PetL, PetM and PetN. The complex functions as a dimer.</text>
</comment>
<comment type="subcellular location">
    <subcellularLocation>
        <location evidence="1">Plastid</location>
        <location evidence="1">Chloroplast thylakoid membrane</location>
        <topology evidence="1">Single-pass membrane protein</topology>
    </subcellularLocation>
</comment>
<comment type="similarity">
    <text evidence="1">Belongs to the PetG family.</text>
</comment>
<dbReference type="EMBL" id="EF587333">
    <property type="protein sequence ID" value="ABU88171.1"/>
    <property type="molecule type" value="Genomic_DNA"/>
</dbReference>
<dbReference type="EMBL" id="EU677193">
    <property type="protein sequence ID" value="ACC97219.1"/>
    <property type="molecule type" value="Genomic_DNA"/>
</dbReference>
<dbReference type="RefSeq" id="YP_002000383.1">
    <property type="nucleotide sequence ID" value="NC_011031.1"/>
</dbReference>
<dbReference type="SMR" id="B2X1V8"/>
<dbReference type="GeneID" id="6440134"/>
<dbReference type="GO" id="GO:0009535">
    <property type="term" value="C:chloroplast thylakoid membrane"/>
    <property type="evidence" value="ECO:0007669"/>
    <property type="project" value="UniProtKB-SubCell"/>
</dbReference>
<dbReference type="GO" id="GO:0009512">
    <property type="term" value="C:cytochrome b6f complex"/>
    <property type="evidence" value="ECO:0007669"/>
    <property type="project" value="InterPro"/>
</dbReference>
<dbReference type="GO" id="GO:0045158">
    <property type="term" value="F:electron transporter, transferring electrons within cytochrome b6/f complex of photosystem II activity"/>
    <property type="evidence" value="ECO:0007669"/>
    <property type="project" value="UniProtKB-UniRule"/>
</dbReference>
<dbReference type="GO" id="GO:0017004">
    <property type="term" value="P:cytochrome complex assembly"/>
    <property type="evidence" value="ECO:0007669"/>
    <property type="project" value="UniProtKB-UniRule"/>
</dbReference>
<dbReference type="GO" id="GO:0015979">
    <property type="term" value="P:photosynthesis"/>
    <property type="evidence" value="ECO:0007669"/>
    <property type="project" value="UniProtKB-KW"/>
</dbReference>
<dbReference type="HAMAP" id="MF_00432">
    <property type="entry name" value="Cytb6_f_PetG"/>
    <property type="match status" value="1"/>
</dbReference>
<dbReference type="InterPro" id="IPR003683">
    <property type="entry name" value="Cyt_6/f_cplx_su5"/>
</dbReference>
<dbReference type="InterPro" id="IPR036099">
    <property type="entry name" value="Cyt_6/f_cplx_su5_sf"/>
</dbReference>
<dbReference type="NCBIfam" id="NF001907">
    <property type="entry name" value="PRK00665.1"/>
    <property type="match status" value="1"/>
</dbReference>
<dbReference type="Pfam" id="PF02529">
    <property type="entry name" value="PetG"/>
    <property type="match status" value="1"/>
</dbReference>
<dbReference type="PIRSF" id="PIRSF000034">
    <property type="entry name" value="Cyt_b6-f_V"/>
    <property type="match status" value="1"/>
</dbReference>
<dbReference type="SUPFAM" id="SSF103446">
    <property type="entry name" value="PetG subunit of the cytochrome b6f complex"/>
    <property type="match status" value="1"/>
</dbReference>
<reference key="1">
    <citation type="journal article" date="2008" name="J. Phycol.">
        <title>Deep division in the Chlorophyceae (Chlorophyta) revealed by chloroplast phylogenomic analyseS.</title>
        <authorList>
            <person name="Turmel M."/>
            <person name="Brouard J.-S."/>
            <person name="Gagnon C."/>
            <person name="Otis C."/>
            <person name="Lemieux C."/>
        </authorList>
        <dbReference type="AGRICOLA" id="IND44059346"/>
    </citation>
    <scope>NUCLEOTIDE SEQUENCE [GENOMIC DNA]</scope>
    <source>
        <strain>SAG 575-1b / CCAP 575/1B / UTEX LB 40</strain>
    </source>
</reference>
<reference key="2">
    <citation type="journal article" date="2008" name="BMC Genomics">
        <title>Chloroplast DNA sequence of the green alga Oedogonium cardiacum (Chlorophyceae): unique genome architecture, derived characters shared with the Chaetophorales and novel genes acquired through horizontal transfer.</title>
        <authorList>
            <person name="Brouard J.-S."/>
            <person name="Otis C."/>
            <person name="Lemieux C."/>
            <person name="Turmel M."/>
        </authorList>
    </citation>
    <scope>NUCLEOTIDE SEQUENCE [LARGE SCALE GENOMIC DNA]</scope>
    <source>
        <strain>SAG 575-1b / CCAP 575/1B / UTEX LB 40</strain>
    </source>
</reference>
<protein>
    <recommendedName>
        <fullName evidence="1">Cytochrome b6-f complex subunit 5</fullName>
    </recommendedName>
    <alternativeName>
        <fullName evidence="1">Cytochrome b6-f complex subunit PetG</fullName>
    </alternativeName>
    <alternativeName>
        <fullName evidence="1">Cytochrome b6-f complex subunit V</fullName>
    </alternativeName>
</protein>
<proteinExistence type="inferred from homology"/>
<organism>
    <name type="scientific">Oedogonium cardiacum</name>
    <name type="common">Filamentous green alga</name>
    <dbReference type="NCBI Taxonomy" id="55995"/>
    <lineage>
        <taxon>Eukaryota</taxon>
        <taxon>Viridiplantae</taxon>
        <taxon>Chlorophyta</taxon>
        <taxon>core chlorophytes</taxon>
        <taxon>Chlorophyceae</taxon>
        <taxon>OCC clade</taxon>
        <taxon>Oedogoniales</taxon>
        <taxon>Oedogoniaceae</taxon>
        <taxon>Oedogonium</taxon>
    </lineage>
</organism>
<gene>
    <name evidence="1" type="primary">petG</name>
</gene>
<accession>B2X1V8</accession>
<feature type="chain" id="PRO_0000355401" description="Cytochrome b6-f complex subunit 5">
    <location>
        <begin position="1"/>
        <end position="37"/>
    </location>
</feature>
<feature type="transmembrane region" description="Helical" evidence="1">
    <location>
        <begin position="5"/>
        <end position="25"/>
    </location>
</feature>